<accession>Q6B8U0</accession>
<keyword id="KW-0150">Chloroplast</keyword>
<keyword id="KW-0249">Electron transport</keyword>
<keyword id="KW-0472">Membrane</keyword>
<keyword id="KW-0602">Photosynthesis</keyword>
<keyword id="KW-0934">Plastid</keyword>
<keyword id="KW-0793">Thylakoid</keyword>
<keyword id="KW-0812">Transmembrane</keyword>
<keyword id="KW-1133">Transmembrane helix</keyword>
<keyword id="KW-0813">Transport</keyword>
<evidence type="ECO:0000255" key="1">
    <source>
        <dbReference type="HAMAP-Rule" id="MF_00395"/>
    </source>
</evidence>
<evidence type="ECO:0000305" key="2"/>
<organism>
    <name type="scientific">Gracilaria tenuistipitata var. liui</name>
    <name type="common">Red alga</name>
    <dbReference type="NCBI Taxonomy" id="285951"/>
    <lineage>
        <taxon>Eukaryota</taxon>
        <taxon>Rhodophyta</taxon>
        <taxon>Florideophyceae</taxon>
        <taxon>Rhodymeniophycidae</taxon>
        <taxon>Gracilariales</taxon>
        <taxon>Gracilariaceae</taxon>
        <taxon>Gracilaria</taxon>
        <taxon>Gracilaria tenuistipitata</taxon>
    </lineage>
</organism>
<geneLocation type="chloroplast"/>
<gene>
    <name evidence="1" type="primary">petN</name>
    <name type="ordered locus">Grc000114</name>
</gene>
<sequence>MLDIISLGWGSLLAIFSFSIALVVWGRNGF</sequence>
<proteinExistence type="inferred from homology"/>
<reference key="1">
    <citation type="journal article" date="2004" name="J. Mol. Evol.">
        <title>Comparative analysis of the complete plastid genome sequence of the red alga Gracilaria tenuistipitata var. liui provides insights into the evolution of rhodoplasts and their relationship to other plastids.</title>
        <authorList>
            <person name="Hagopian J.C."/>
            <person name="Reis M."/>
            <person name="Kitajima J.P."/>
            <person name="Bhattacharya D."/>
            <person name="de Oliveira M.C."/>
        </authorList>
    </citation>
    <scope>NUCLEOTIDE SEQUENCE [LARGE SCALE GENOMIC DNA]</scope>
</reference>
<name>PETN_GRATL</name>
<feature type="chain" id="PRO_0000217108" description="Cytochrome b6-f complex subunit 8">
    <location>
        <begin position="1"/>
        <end position="30"/>
    </location>
</feature>
<feature type="transmembrane region" description="Helical" evidence="1">
    <location>
        <begin position="4"/>
        <end position="24"/>
    </location>
</feature>
<protein>
    <recommendedName>
        <fullName evidence="1">Cytochrome b6-f complex subunit 8</fullName>
    </recommendedName>
    <alternativeName>
        <fullName evidence="1">Cytochrome b6-f complex subunit PetN</fullName>
    </alternativeName>
    <alternativeName>
        <fullName evidence="1">Cytochrome b6-f complex subunit VIII</fullName>
    </alternativeName>
</protein>
<comment type="function">
    <text evidence="1">Component of the cytochrome b6-f complex, which mediates electron transfer between photosystem II (PSII) and photosystem I (PSI), cyclic electron flow around PSI, and state transitions.</text>
</comment>
<comment type="subunit">
    <text evidence="1">The 4 large subunits of the cytochrome b6-f complex are cytochrome b6, subunit IV (17 kDa polypeptide, PetD), cytochrome f and the Rieske protein, while the 4 small subunits are PetG, PetL, PetM and PetN. The complex functions as a dimer.</text>
</comment>
<comment type="subcellular location">
    <subcellularLocation>
        <location evidence="1">Plastid</location>
        <location evidence="1">Chloroplast thylakoid membrane</location>
        <topology evidence="1">Single-pass membrane protein</topology>
    </subcellularLocation>
</comment>
<comment type="similarity">
    <text evidence="1">Belongs to the PetN family.</text>
</comment>
<comment type="sequence caution" evidence="2">
    <conflict type="erroneous initiation">
        <sequence resource="EMBL-CDS" id="AAT79695"/>
    </conflict>
</comment>
<dbReference type="EMBL" id="AY673996">
    <property type="protein sequence ID" value="AAT79695.1"/>
    <property type="status" value="ALT_INIT"/>
    <property type="molecule type" value="Genomic_DNA"/>
</dbReference>
<dbReference type="RefSeq" id="YP_063620.1">
    <property type="nucleotide sequence ID" value="NC_006137.1"/>
</dbReference>
<dbReference type="SMR" id="Q6B8U0"/>
<dbReference type="GeneID" id="2943951"/>
<dbReference type="GO" id="GO:0009535">
    <property type="term" value="C:chloroplast thylakoid membrane"/>
    <property type="evidence" value="ECO:0007669"/>
    <property type="project" value="UniProtKB-SubCell"/>
</dbReference>
<dbReference type="GO" id="GO:0009512">
    <property type="term" value="C:cytochrome b6f complex"/>
    <property type="evidence" value="ECO:0007669"/>
    <property type="project" value="InterPro"/>
</dbReference>
<dbReference type="GO" id="GO:0045158">
    <property type="term" value="F:electron transporter, transferring electrons within cytochrome b6/f complex of photosystem II activity"/>
    <property type="evidence" value="ECO:0007669"/>
    <property type="project" value="InterPro"/>
</dbReference>
<dbReference type="GO" id="GO:0017004">
    <property type="term" value="P:cytochrome complex assembly"/>
    <property type="evidence" value="ECO:0007669"/>
    <property type="project" value="UniProtKB-UniRule"/>
</dbReference>
<dbReference type="GO" id="GO:0015979">
    <property type="term" value="P:photosynthesis"/>
    <property type="evidence" value="ECO:0007669"/>
    <property type="project" value="UniProtKB-KW"/>
</dbReference>
<dbReference type="HAMAP" id="MF_00395">
    <property type="entry name" value="Cytb6_f_PetN"/>
    <property type="match status" value="1"/>
</dbReference>
<dbReference type="InterPro" id="IPR036143">
    <property type="entry name" value="Cytochr_b6-f_cplx_su8_sf"/>
</dbReference>
<dbReference type="InterPro" id="IPR005497">
    <property type="entry name" value="Cytochrome_b6-f_cplx_su8"/>
</dbReference>
<dbReference type="Pfam" id="PF03742">
    <property type="entry name" value="PetN"/>
    <property type="match status" value="1"/>
</dbReference>
<dbReference type="SUPFAM" id="SSF103451">
    <property type="entry name" value="PetN subunit of the cytochrome b6f complex"/>
    <property type="match status" value="1"/>
</dbReference>